<gene>
    <name type="primary">Phf2</name>
    <name type="synonym">Kiaa0662</name>
</gene>
<organism>
    <name type="scientific">Mus musculus</name>
    <name type="common">Mouse</name>
    <dbReference type="NCBI Taxonomy" id="10090"/>
    <lineage>
        <taxon>Eukaryota</taxon>
        <taxon>Metazoa</taxon>
        <taxon>Chordata</taxon>
        <taxon>Craniata</taxon>
        <taxon>Vertebrata</taxon>
        <taxon>Euteleostomi</taxon>
        <taxon>Mammalia</taxon>
        <taxon>Eutheria</taxon>
        <taxon>Euarchontoglires</taxon>
        <taxon>Glires</taxon>
        <taxon>Rodentia</taxon>
        <taxon>Myomorpha</taxon>
        <taxon>Muroidea</taxon>
        <taxon>Muridae</taxon>
        <taxon>Murinae</taxon>
        <taxon>Mus</taxon>
        <taxon>Mus</taxon>
    </lineage>
</organism>
<name>PHF2_MOUSE</name>
<keyword id="KW-0007">Acetylation</keyword>
<keyword id="KW-0010">Activator</keyword>
<keyword id="KW-0137">Centromere</keyword>
<keyword id="KW-0156">Chromatin regulator</keyword>
<keyword id="KW-0158">Chromosome</keyword>
<keyword id="KW-0223">Dioxygenase</keyword>
<keyword id="KW-0408">Iron</keyword>
<keyword id="KW-1017">Isopeptide bond</keyword>
<keyword id="KW-0995">Kinetochore</keyword>
<keyword id="KW-0479">Metal-binding</keyword>
<keyword id="KW-0539">Nucleus</keyword>
<keyword id="KW-0560">Oxidoreductase</keyword>
<keyword id="KW-0597">Phosphoprotein</keyword>
<keyword id="KW-1185">Reference proteome</keyword>
<keyword id="KW-0804">Transcription</keyword>
<keyword id="KW-0805">Transcription regulation</keyword>
<keyword id="KW-0832">Ubl conjugation</keyword>
<keyword id="KW-0862">Zinc</keyword>
<keyword id="KW-0863">Zinc-finger</keyword>
<accession>Q9WTU0</accession>
<accession>Q6A023</accession>
<accession>Q80WA8</accession>
<comment type="function">
    <text evidence="2 6">Lysine demethylase that demethylates both histones and non-histone proteins (PubMed:22921934). Enzymatically inactive by itself, and becomes active following phosphorylation by PKA: forms a complex with ARID5B and mediates demethylation of methylated ARID5B. Demethylation of ARID5B leads to target the PHF2-ARID5B complex to target promoters, where PHF2 mediates demethylation of dimethylated 'Lys-9' of histone H3 (H3K9me2), followed by transcription activation of target genes. The PHF2-ARID5B complex acts as a coactivator of HNF4A in liver. PHF2 is recruited to trimethylated 'Lys-4' of histone H3 (H3K4me3) at rDNA promoters and promotes expression of rDNA (By similarity). Involved in the activation of toll-like receptor 4 (TLR4)-target inflammatory genes in macrophages by catalyzing the demethylation of trimethylated histone H4 lysine 20 (H4K20me3) at the gene promoters (PubMed:22921934).</text>
</comment>
<comment type="catalytic activity">
    <reaction evidence="2">
        <text>N(6),N(6)-dimethyl-L-lysyl(9)-[histone H3] + 2-oxoglutarate + O2 = N(6)-methyl-L-lysyl(9)-[histone H3] + formaldehyde + succinate + CO2</text>
        <dbReference type="Rhea" id="RHEA:60192"/>
        <dbReference type="Rhea" id="RHEA-COMP:15541"/>
        <dbReference type="Rhea" id="RHEA-COMP:15542"/>
        <dbReference type="ChEBI" id="CHEBI:15379"/>
        <dbReference type="ChEBI" id="CHEBI:16526"/>
        <dbReference type="ChEBI" id="CHEBI:16810"/>
        <dbReference type="ChEBI" id="CHEBI:16842"/>
        <dbReference type="ChEBI" id="CHEBI:30031"/>
        <dbReference type="ChEBI" id="CHEBI:61929"/>
        <dbReference type="ChEBI" id="CHEBI:61976"/>
    </reaction>
    <physiologicalReaction direction="left-to-right" evidence="2">
        <dbReference type="Rhea" id="RHEA:60193"/>
    </physiologicalReaction>
</comment>
<comment type="activity regulation">
    <text evidence="1">Enzymatically inactive by itself, and become active following phosphorylation by PKA.</text>
</comment>
<comment type="subunit">
    <text evidence="2 6">Component of the PHF2-ARID5B complex, at least composed of PHF2 and ARID5B. Interacts with HNF4A and NR1H4 (By similarity). Interacts with RELA (PubMed:22921934).</text>
</comment>
<comment type="subcellular location">
    <subcellularLocation>
        <location evidence="2">Nucleus</location>
        <location evidence="2">Nucleolus</location>
    </subcellularLocation>
    <subcellularLocation>
        <location evidence="2">Chromosome</location>
        <location evidence="2">Centromere</location>
        <location evidence="2">Kinetochore</location>
    </subcellularLocation>
</comment>
<comment type="domain">
    <text evidence="1">The PHD-type zinc finger mediates the binding to H3K4me2 and H3K4me3.</text>
</comment>
<comment type="PTM">
    <text evidence="1">Phosphorylated by PKA on specific serine residues, leading to the formation of an active lysine demethylase complex.</text>
</comment>
<comment type="similarity">
    <text evidence="7">Belongs to the JHDM1 histone demethylase family. JHDM1D subfamily.</text>
</comment>
<comment type="caution">
    <text evidence="7">In contrast to the related histone demethylases JHDM1D and PHF8, the conserved active His in position 321 is replaced by a Tyr. However, the presence of a Tyr residue neither affects binding to the catalytic iron nor abolishes demethylase activity.</text>
</comment>
<reference key="1">
    <citation type="journal article" date="1999" name="Mamm. Genome">
        <title>PHF2, a novel PHD finger gene located on human chromosome 9q22.</title>
        <authorList>
            <person name="Hasenpusch-Theil K."/>
            <person name="Chadwick B.P."/>
            <person name="Theil T."/>
            <person name="Heath S.K."/>
            <person name="Wilkinson D.G."/>
            <person name="Frischauf A.M."/>
        </authorList>
    </citation>
    <scope>NUCLEOTIDE SEQUENCE [MRNA]</scope>
</reference>
<reference key="2">
    <citation type="journal article" date="2009" name="PLoS Biol.">
        <title>Lineage-specific biology revealed by a finished genome assembly of the mouse.</title>
        <authorList>
            <person name="Church D.M."/>
            <person name="Goodstadt L."/>
            <person name="Hillier L.W."/>
            <person name="Zody M.C."/>
            <person name="Goldstein S."/>
            <person name="She X."/>
            <person name="Bult C.J."/>
            <person name="Agarwala R."/>
            <person name="Cherry J.L."/>
            <person name="DiCuccio M."/>
            <person name="Hlavina W."/>
            <person name="Kapustin Y."/>
            <person name="Meric P."/>
            <person name="Maglott D."/>
            <person name="Birtle Z."/>
            <person name="Marques A.C."/>
            <person name="Graves T."/>
            <person name="Zhou S."/>
            <person name="Teague B."/>
            <person name="Potamousis K."/>
            <person name="Churas C."/>
            <person name="Place M."/>
            <person name="Herschleb J."/>
            <person name="Runnheim R."/>
            <person name="Forrest D."/>
            <person name="Amos-Landgraf J."/>
            <person name="Schwartz D.C."/>
            <person name="Cheng Z."/>
            <person name="Lindblad-Toh K."/>
            <person name="Eichler E.E."/>
            <person name="Ponting C.P."/>
        </authorList>
    </citation>
    <scope>NUCLEOTIDE SEQUENCE [LARGE SCALE GENOMIC DNA]</scope>
    <source>
        <strain>C57BL/6J</strain>
    </source>
</reference>
<reference key="3">
    <citation type="journal article" date="2004" name="Genome Res.">
        <title>The status, quality, and expansion of the NIH full-length cDNA project: the Mammalian Gene Collection (MGC).</title>
        <authorList>
            <consortium name="The MGC Project Team"/>
        </authorList>
    </citation>
    <scope>NUCLEOTIDE SEQUENCE [LARGE SCALE MRNA]</scope>
    <source>
        <tissue>Limb</tissue>
    </source>
</reference>
<reference key="4">
    <citation type="journal article" date="2004" name="DNA Res.">
        <title>Prediction of the coding sequences of mouse homologues of KIAA gene: IV. The complete nucleotide sequences of 500 mouse KIAA-homologous cDNAs identified by screening of terminal sequences of cDNA clones randomly sampled from size-fractionated libraries.</title>
        <authorList>
            <person name="Okazaki N."/>
            <person name="Kikuno R."/>
            <person name="Ohara R."/>
            <person name="Inamoto S."/>
            <person name="Koseki H."/>
            <person name="Hiraoka S."/>
            <person name="Saga Y."/>
            <person name="Seino S."/>
            <person name="Nishimura M."/>
            <person name="Kaisho T."/>
            <person name="Hoshino K."/>
            <person name="Kitamura H."/>
            <person name="Nagase T."/>
            <person name="Ohara O."/>
            <person name="Koga H."/>
        </authorList>
    </citation>
    <scope>NUCLEOTIDE SEQUENCE [LARGE SCALE MRNA] OF 59-1096</scope>
</reference>
<reference key="5">
    <citation type="journal article" date="2010" name="Cell">
        <title>A tissue-specific atlas of mouse protein phosphorylation and expression.</title>
        <authorList>
            <person name="Huttlin E.L."/>
            <person name="Jedrychowski M.P."/>
            <person name="Elias J.E."/>
            <person name="Goswami T."/>
            <person name="Rad R."/>
            <person name="Beausoleil S.A."/>
            <person name="Villen J."/>
            <person name="Haas W."/>
            <person name="Sowa M.E."/>
            <person name="Gygi S.P."/>
        </authorList>
    </citation>
    <scope>PHOSPHORYLATION [LARGE SCALE ANALYSIS] AT SER-474; SER-651; SER-677; TYR-724; SER-726; SER-729; SER-730; SER-734; SER-873; SER-876 AND SER-893</scope>
    <scope>IDENTIFICATION BY MASS SPECTROMETRY [LARGE SCALE ANALYSIS]</scope>
    <source>
        <tissue>Brain</tissue>
        <tissue>Brown adipose tissue</tissue>
        <tissue>Heart</tissue>
        <tissue>Kidney</tissue>
        <tissue>Liver</tissue>
        <tissue>Lung</tissue>
        <tissue>Pancreas</tissue>
        <tissue>Spleen</tissue>
        <tissue>Testis</tissue>
    </source>
</reference>
<reference key="6">
    <citation type="journal article" date="2010" name="J. Biol. Chem.">
        <title>Recognition of histone H3K4 trimethylation by the plant homeodomain of PHF2 modulates histone demethylation.</title>
        <authorList>
            <person name="Wen H."/>
            <person name="Li J."/>
            <person name="Song T."/>
            <person name="Lu M."/>
            <person name="Kan P.Y."/>
            <person name="Lee M.G."/>
            <person name="Sha B."/>
            <person name="Shi X."/>
        </authorList>
    </citation>
    <scope>CATALYTIC ACTIVITY</scope>
</reference>
<reference key="7">
    <citation type="journal article" date="2012" name="Mol. Cell">
        <title>Control of proinflammatory gene programs by regulated trimethylation and demethylation of histone H4K20.</title>
        <authorList>
            <person name="Stender J.D."/>
            <person name="Pascual G."/>
            <person name="Liu W."/>
            <person name="Kaikkonen M.U."/>
            <person name="Do K."/>
            <person name="Spann N.J."/>
            <person name="Boutros M."/>
            <person name="Perrimon N."/>
            <person name="Rosenfeld M.G."/>
            <person name="Glass C.K."/>
        </authorList>
    </citation>
    <scope>FUNCTION</scope>
    <scope>CATALYTIC ACTIVITY</scope>
    <scope>INTERACTION WITH RELA</scope>
</reference>
<reference key="8">
    <citation type="journal article" date="2013" name="Mol. Cell">
        <title>SIRT5-mediated lysine desuccinylation impacts diverse metabolic pathways.</title>
        <authorList>
            <person name="Park J."/>
            <person name="Chen Y."/>
            <person name="Tishkoff D.X."/>
            <person name="Peng C."/>
            <person name="Tan M."/>
            <person name="Dai L."/>
            <person name="Xie Z."/>
            <person name="Zhang Y."/>
            <person name="Zwaans B.M."/>
            <person name="Skinner M.E."/>
            <person name="Lombard D.B."/>
            <person name="Zhao Y."/>
        </authorList>
    </citation>
    <scope>ACETYLATION [LARGE SCALE ANALYSIS] AT LYS-716</scope>
    <scope>IDENTIFICATION BY MASS SPECTROMETRY [LARGE SCALE ANALYSIS]</scope>
    <source>
        <tissue>Embryonic fibroblast</tissue>
    </source>
</reference>
<dbReference type="EC" id="1.14.11.-" evidence="2"/>
<dbReference type="EMBL" id="AF043726">
    <property type="protein sequence ID" value="AAD21792.1"/>
    <property type="molecule type" value="mRNA"/>
</dbReference>
<dbReference type="EMBL" id="AC109249">
    <property type="status" value="NOT_ANNOTATED_CDS"/>
    <property type="molecule type" value="Genomic_DNA"/>
</dbReference>
<dbReference type="EMBL" id="BC051633">
    <property type="protein sequence ID" value="AAH51633.1"/>
    <property type="molecule type" value="mRNA"/>
</dbReference>
<dbReference type="EMBL" id="AK172995">
    <property type="protein sequence ID" value="BAD32273.1"/>
    <property type="molecule type" value="mRNA"/>
</dbReference>
<dbReference type="CCDS" id="CCDS26496.1"/>
<dbReference type="RefSeq" id="NP_035208.2">
    <property type="nucleotide sequence ID" value="NM_011078.3"/>
</dbReference>
<dbReference type="SMR" id="Q9WTU0"/>
<dbReference type="BioGRID" id="202144">
    <property type="interactions" value="7"/>
</dbReference>
<dbReference type="FunCoup" id="Q9WTU0">
    <property type="interactions" value="2631"/>
</dbReference>
<dbReference type="IntAct" id="Q9WTU0">
    <property type="interactions" value="5"/>
</dbReference>
<dbReference type="STRING" id="10090.ENSMUSP00000047308"/>
<dbReference type="GlyGen" id="Q9WTU0">
    <property type="glycosylation" value="2 sites, 1 N-linked glycan (1 site)"/>
</dbReference>
<dbReference type="iPTMnet" id="Q9WTU0"/>
<dbReference type="PhosphoSitePlus" id="Q9WTU0"/>
<dbReference type="SwissPalm" id="Q9WTU0"/>
<dbReference type="jPOST" id="Q9WTU0"/>
<dbReference type="PaxDb" id="10090-ENSMUSP00000047308"/>
<dbReference type="PeptideAtlas" id="Q9WTU0"/>
<dbReference type="ProteomicsDB" id="287703"/>
<dbReference type="Pumba" id="Q9WTU0"/>
<dbReference type="Antibodypedia" id="2009">
    <property type="antibodies" value="94 antibodies from 23 providers"/>
</dbReference>
<dbReference type="DNASU" id="18676"/>
<dbReference type="Ensembl" id="ENSMUST00000035540.9">
    <property type="protein sequence ID" value="ENSMUSP00000047308.8"/>
    <property type="gene ID" value="ENSMUSG00000038025.9"/>
</dbReference>
<dbReference type="GeneID" id="18676"/>
<dbReference type="KEGG" id="mmu:18676"/>
<dbReference type="UCSC" id="uc007qim.1">
    <property type="organism name" value="mouse"/>
</dbReference>
<dbReference type="AGR" id="MGI:1338034"/>
<dbReference type="CTD" id="5253"/>
<dbReference type="MGI" id="MGI:1338034">
    <property type="gene designation" value="Phf2"/>
</dbReference>
<dbReference type="VEuPathDB" id="HostDB:ENSMUSG00000038025"/>
<dbReference type="eggNOG" id="KOG1633">
    <property type="taxonomic scope" value="Eukaryota"/>
</dbReference>
<dbReference type="GeneTree" id="ENSGT00940000158148"/>
<dbReference type="HOGENOM" id="CLU_003540_2_0_1"/>
<dbReference type="InParanoid" id="Q9WTU0"/>
<dbReference type="OMA" id="AWYHILK"/>
<dbReference type="OrthoDB" id="5876800at2759"/>
<dbReference type="PhylomeDB" id="Q9WTU0"/>
<dbReference type="TreeFam" id="TF106480"/>
<dbReference type="Reactome" id="R-MMU-3214842">
    <property type="pathway name" value="HDMs demethylate histones"/>
</dbReference>
<dbReference type="BioGRID-ORCS" id="18676">
    <property type="hits" value="0 hits in 83 CRISPR screens"/>
</dbReference>
<dbReference type="ChiTaRS" id="Phf1">
    <property type="organism name" value="mouse"/>
</dbReference>
<dbReference type="PRO" id="PR:Q9WTU0"/>
<dbReference type="Proteomes" id="UP000000589">
    <property type="component" value="Chromosome 13"/>
</dbReference>
<dbReference type="RNAct" id="Q9WTU0">
    <property type="molecule type" value="protein"/>
</dbReference>
<dbReference type="Bgee" id="ENSMUSG00000038025">
    <property type="expression patterns" value="Expressed in ascending aorta and 250 other cell types or tissues"/>
</dbReference>
<dbReference type="GO" id="GO:0000776">
    <property type="term" value="C:kinetochore"/>
    <property type="evidence" value="ECO:0000250"/>
    <property type="project" value="UniProtKB"/>
</dbReference>
<dbReference type="GO" id="GO:0005730">
    <property type="term" value="C:nucleolus"/>
    <property type="evidence" value="ECO:0000250"/>
    <property type="project" value="UniProtKB"/>
</dbReference>
<dbReference type="GO" id="GO:0005654">
    <property type="term" value="C:nucleoplasm"/>
    <property type="evidence" value="ECO:0007669"/>
    <property type="project" value="Ensembl"/>
</dbReference>
<dbReference type="GO" id="GO:0140002">
    <property type="term" value="F:histone H3K4me3 reader activity"/>
    <property type="evidence" value="ECO:0000250"/>
    <property type="project" value="UniProtKB"/>
</dbReference>
<dbReference type="GO" id="GO:0032454">
    <property type="term" value="F:histone H3K9 demethylase activity"/>
    <property type="evidence" value="ECO:0000250"/>
    <property type="project" value="UniProtKB"/>
</dbReference>
<dbReference type="GO" id="GO:0035575">
    <property type="term" value="F:histone H4K20 demethylase activity"/>
    <property type="evidence" value="ECO:0000315"/>
    <property type="project" value="UniProtKB"/>
</dbReference>
<dbReference type="GO" id="GO:0005506">
    <property type="term" value="F:iron ion binding"/>
    <property type="evidence" value="ECO:0000250"/>
    <property type="project" value="UniProtKB"/>
</dbReference>
<dbReference type="GO" id="GO:0003713">
    <property type="term" value="F:transcription coactivator activity"/>
    <property type="evidence" value="ECO:0000250"/>
    <property type="project" value="UniProtKB"/>
</dbReference>
<dbReference type="GO" id="GO:0008270">
    <property type="term" value="F:zinc ion binding"/>
    <property type="evidence" value="ECO:0000250"/>
    <property type="project" value="UniProtKB"/>
</dbReference>
<dbReference type="GO" id="GO:0061188">
    <property type="term" value="P:negative regulation of rDNA heterochromatin formation"/>
    <property type="evidence" value="ECO:0000250"/>
    <property type="project" value="UniProtKB"/>
</dbReference>
<dbReference type="GO" id="GO:0006482">
    <property type="term" value="P:protein demethylation"/>
    <property type="evidence" value="ECO:0000250"/>
    <property type="project" value="UniProtKB"/>
</dbReference>
<dbReference type="GO" id="GO:0045815">
    <property type="term" value="P:transcription initiation-coupled chromatin remodeling"/>
    <property type="evidence" value="ECO:0000315"/>
    <property type="project" value="UniProtKB"/>
</dbReference>
<dbReference type="CDD" id="cd15554">
    <property type="entry name" value="PHD_PHF2_like"/>
    <property type="match status" value="1"/>
</dbReference>
<dbReference type="FunFam" id="1.20.58.1360:FF:000001">
    <property type="entry name" value="Histone lysine demethylase PHF8"/>
    <property type="match status" value="1"/>
</dbReference>
<dbReference type="FunFam" id="3.30.40.10:FF:000193">
    <property type="entry name" value="lysine-specific demethylase PHF2 isoform X1"/>
    <property type="match status" value="1"/>
</dbReference>
<dbReference type="FunFam" id="2.60.120.650:FF:000011">
    <property type="entry name" value="PHD finger protein 2"/>
    <property type="match status" value="1"/>
</dbReference>
<dbReference type="Gene3D" id="1.20.58.1360">
    <property type="match status" value="1"/>
</dbReference>
<dbReference type="Gene3D" id="2.60.120.650">
    <property type="entry name" value="Cupin"/>
    <property type="match status" value="1"/>
</dbReference>
<dbReference type="Gene3D" id="3.30.40.10">
    <property type="entry name" value="Zinc/RING finger domain, C3HC4 (zinc finger)"/>
    <property type="match status" value="1"/>
</dbReference>
<dbReference type="InterPro" id="IPR041070">
    <property type="entry name" value="JHD"/>
</dbReference>
<dbReference type="InterPro" id="IPR050690">
    <property type="entry name" value="JHDM1_Histone_Demethylase"/>
</dbReference>
<dbReference type="InterPro" id="IPR003347">
    <property type="entry name" value="JmjC_dom"/>
</dbReference>
<dbReference type="InterPro" id="IPR019786">
    <property type="entry name" value="Zinc_finger_PHD-type_CS"/>
</dbReference>
<dbReference type="InterPro" id="IPR011011">
    <property type="entry name" value="Znf_FYVE_PHD"/>
</dbReference>
<dbReference type="InterPro" id="IPR001965">
    <property type="entry name" value="Znf_PHD"/>
</dbReference>
<dbReference type="InterPro" id="IPR019787">
    <property type="entry name" value="Znf_PHD-finger"/>
</dbReference>
<dbReference type="InterPro" id="IPR013083">
    <property type="entry name" value="Znf_RING/FYVE/PHD"/>
</dbReference>
<dbReference type="PANTHER" id="PTHR23123">
    <property type="entry name" value="PHD/F-BOX CONTAINING PROTEIN"/>
    <property type="match status" value="1"/>
</dbReference>
<dbReference type="Pfam" id="PF17811">
    <property type="entry name" value="JHD"/>
    <property type="match status" value="1"/>
</dbReference>
<dbReference type="Pfam" id="PF02373">
    <property type="entry name" value="JmjC"/>
    <property type="match status" value="1"/>
</dbReference>
<dbReference type="Pfam" id="PF00628">
    <property type="entry name" value="PHD"/>
    <property type="match status" value="1"/>
</dbReference>
<dbReference type="SMART" id="SM00558">
    <property type="entry name" value="JmjC"/>
    <property type="match status" value="1"/>
</dbReference>
<dbReference type="SMART" id="SM00249">
    <property type="entry name" value="PHD"/>
    <property type="match status" value="1"/>
</dbReference>
<dbReference type="SUPFAM" id="SSF51197">
    <property type="entry name" value="Clavaminate synthase-like"/>
    <property type="match status" value="1"/>
</dbReference>
<dbReference type="SUPFAM" id="SSF57903">
    <property type="entry name" value="FYVE/PHD zinc finger"/>
    <property type="match status" value="1"/>
</dbReference>
<dbReference type="PROSITE" id="PS51184">
    <property type="entry name" value="JMJC"/>
    <property type="match status" value="1"/>
</dbReference>
<dbReference type="PROSITE" id="PS01359">
    <property type="entry name" value="ZF_PHD_1"/>
    <property type="match status" value="1"/>
</dbReference>
<dbReference type="PROSITE" id="PS50016">
    <property type="entry name" value="ZF_PHD_2"/>
    <property type="match status" value="1"/>
</dbReference>
<evidence type="ECO:0000250" key="1"/>
<evidence type="ECO:0000250" key="2">
    <source>
        <dbReference type="UniProtKB" id="O75151"/>
    </source>
</evidence>
<evidence type="ECO:0000255" key="3">
    <source>
        <dbReference type="PROSITE-ProRule" id="PRU00146"/>
    </source>
</evidence>
<evidence type="ECO:0000255" key="4">
    <source>
        <dbReference type="PROSITE-ProRule" id="PRU00538"/>
    </source>
</evidence>
<evidence type="ECO:0000256" key="5">
    <source>
        <dbReference type="SAM" id="MobiDB-lite"/>
    </source>
</evidence>
<evidence type="ECO:0000269" key="6">
    <source>
    </source>
</evidence>
<evidence type="ECO:0000305" key="7"/>
<evidence type="ECO:0007744" key="8">
    <source>
    </source>
</evidence>
<evidence type="ECO:0007744" key="9">
    <source>
    </source>
</evidence>
<protein>
    <recommendedName>
        <fullName>Lysine-specific demethylase PHF2</fullName>
        <ecNumber evidence="2">1.14.11.-</ecNumber>
    </recommendedName>
    <alternativeName>
        <fullName>GRC5</fullName>
    </alternativeName>
    <alternativeName>
        <fullName>PHD finger protein 2</fullName>
    </alternativeName>
</protein>
<sequence length="1096" mass="120814">MATVPVYCVCRLPYDVTRFMIECDACKDWFHGSCVGVEEEEAPDIDIYHCPNCEKTHGKSTLKKKRTWHKHGPGPTPDVKPVQNGSQLFIKELRSRTFPSAEDVVSRVPGSQLTVGYMEEHGFTEPILVPKKDGLGLAVPAPTFYVSDVENYVGPERSVDVTDVTKQKDCKMKLKEFVDYYYSTNRKRVLNVTNLEFSDTRMSSFVEPPDIVKKLSWVENYWPDDALLAKPKVTKYCLICVKDSYTDFHIDSGGASAWYHVLKGEKIFYLIRPASANISLYERWRSASNHSEMFFADQVDRCYKCTVKQGQTLFIPSGWIYATLTPVDCLAFAGHFLHSLSVEMQMRAYEVERRLKLGSLTQFPNFETACWYMGKHLLEAFKGSHKSGKQLPPHLVQGAKILNGAFRSWTKKQALAEHEDELPEHFRPSQLIKDLAKEIRLSENASKTVRPEVNAAASSDEVCDGDREKEEPPSPVETTPPRSLLEKVSKKKTSKTVKMPKPSKIPKPPKSPKPPKTLKLKDGSKKKGKKCKESASPTIPNLDLLEAHTKEALTKMEPPKKGKTPKSVLSVPNKDTVHTQNDMERLEIREQTKSKSEAKWKYKNSKPDSLLKMEEEQRLEKSPLAGNKDKFSFSFSNRKLLGSKALRPPSSPGVFGALQSFKEDKAKPVRDEYEYVSDDGELKIDEFPIRRKKSAPKRDLSFLLDKKEALLMPTSKPKLDSAVYKSDDSSDEGSLHIDTDTKPGRNAKVKKESGSSAAGILDLLQASEEVGALEYNPNSQPPASPSTQEAIQGMLSMANLQASDSCLQTTWGTGQAKGGSLAAHGARKIGGGNKGTGKRLLKRTAKNSVDLEDYEEQDHLDACFKDSDYVYPSLESDEDNPVFKSRSKKRKGSDDAPYSPTARVGPSVPRQDRPVREGTRVASIETGLAAAAAKLSQQEEQKNRKKKNTKRKPAPNTASPSISTSASASTGTTSASTTPASTTPASTTPASTTPASTSTASSQASQEGSSPEPPPESHSSSLADHEYTAAGTFSGSQAGRASQPMAPGVFLTQRRPSASSPNNTAAKGKRTKKGMATAKQRLGKILKIHRNGKLLL</sequence>
<feature type="chain" id="PRO_0000059291" description="Lysine-specific demethylase PHF2">
    <location>
        <begin position="1"/>
        <end position="1096"/>
    </location>
</feature>
<feature type="domain" description="JmjC" evidence="4">
    <location>
        <begin position="197"/>
        <end position="353"/>
    </location>
</feature>
<feature type="zinc finger region" description="PHD-type" evidence="3">
    <location>
        <begin position="5"/>
        <end position="56"/>
    </location>
</feature>
<feature type="region of interest" description="Disordered" evidence="5">
    <location>
        <begin position="448"/>
        <end position="630"/>
    </location>
</feature>
<feature type="region of interest" description="Disordered" evidence="5">
    <location>
        <begin position="719"/>
        <end position="755"/>
    </location>
</feature>
<feature type="region of interest" description="Disordered" evidence="5">
    <location>
        <begin position="811"/>
        <end position="841"/>
    </location>
</feature>
<feature type="region of interest" description="Disordered" evidence="5">
    <location>
        <begin position="871"/>
        <end position="1080"/>
    </location>
</feature>
<feature type="compositionally biased region" description="Pro residues" evidence="5">
    <location>
        <begin position="503"/>
        <end position="515"/>
    </location>
</feature>
<feature type="compositionally biased region" description="Basic and acidic residues" evidence="5">
    <location>
        <begin position="545"/>
        <end position="560"/>
    </location>
</feature>
<feature type="compositionally biased region" description="Basic and acidic residues" evidence="5">
    <location>
        <begin position="575"/>
        <end position="630"/>
    </location>
</feature>
<feature type="compositionally biased region" description="Basic and acidic residues" evidence="5">
    <location>
        <begin position="725"/>
        <end position="753"/>
    </location>
</feature>
<feature type="compositionally biased region" description="Basic and acidic residues" evidence="5">
    <location>
        <begin position="910"/>
        <end position="919"/>
    </location>
</feature>
<feature type="compositionally biased region" description="Basic residues" evidence="5">
    <location>
        <begin position="943"/>
        <end position="953"/>
    </location>
</feature>
<feature type="compositionally biased region" description="Low complexity" evidence="5">
    <location>
        <begin position="954"/>
        <end position="1010"/>
    </location>
</feature>
<feature type="compositionally biased region" description="Polar residues" evidence="5">
    <location>
        <begin position="1031"/>
        <end position="1040"/>
    </location>
</feature>
<feature type="compositionally biased region" description="Polar residues" evidence="5">
    <location>
        <begin position="1054"/>
        <end position="1065"/>
    </location>
</feature>
<feature type="binding site" evidence="1">
    <location>
        <position position="193"/>
    </location>
    <ligand>
        <name>2-oxoglutarate</name>
        <dbReference type="ChEBI" id="CHEBI:16810"/>
    </ligand>
</feature>
<feature type="binding site" evidence="1">
    <location>
        <position position="246"/>
    </location>
    <ligand>
        <name>2-oxoglutarate</name>
        <dbReference type="ChEBI" id="CHEBI:16810"/>
    </ligand>
</feature>
<feature type="binding site" evidence="4">
    <location>
        <position position="249"/>
    </location>
    <ligand>
        <name>Fe cation</name>
        <dbReference type="ChEBI" id="CHEBI:24875"/>
        <note>catalytic</note>
    </ligand>
</feature>
<feature type="binding site" evidence="4">
    <location>
        <position position="251"/>
    </location>
    <ligand>
        <name>Fe cation</name>
        <dbReference type="ChEBI" id="CHEBI:24875"/>
        <note>catalytic</note>
    </ligand>
</feature>
<feature type="binding site" evidence="1">
    <location>
        <position position="259"/>
    </location>
    <ligand>
        <name>2-oxoglutarate</name>
        <dbReference type="ChEBI" id="CHEBI:16810"/>
    </ligand>
</feature>
<feature type="binding site" evidence="1">
    <location>
        <position position="266"/>
    </location>
    <ligand>
        <name>2-oxoglutarate</name>
        <dbReference type="ChEBI" id="CHEBI:16810"/>
    </ligand>
</feature>
<feature type="binding site" evidence="4">
    <location>
        <position position="321"/>
    </location>
    <ligand>
        <name>Fe cation</name>
        <dbReference type="ChEBI" id="CHEBI:24875"/>
        <note>catalytic</note>
    </ligand>
</feature>
<feature type="binding site" evidence="1">
    <location>
        <position position="323"/>
    </location>
    <ligand>
        <name>2-oxoglutarate</name>
        <dbReference type="ChEBI" id="CHEBI:16810"/>
    </ligand>
</feature>
<feature type="modified residue" description="Phosphoserine" evidence="8">
    <location>
        <position position="474"/>
    </location>
</feature>
<feature type="modified residue" description="Phosphothreonine" evidence="2">
    <location>
        <position position="479"/>
    </location>
</feature>
<feature type="modified residue" description="Phosphoserine" evidence="2">
    <location>
        <position position="536"/>
    </location>
</feature>
<feature type="modified residue" description="Phosphoserine" evidence="8">
    <location>
        <position position="651"/>
    </location>
</feature>
<feature type="modified residue" description="Phosphoserine" evidence="8">
    <location>
        <position position="677"/>
    </location>
</feature>
<feature type="modified residue" description="Phosphoserine" evidence="2">
    <location>
        <position position="701"/>
    </location>
</feature>
<feature type="modified residue" description="N6-acetyllysine" evidence="9">
    <location>
        <position position="716"/>
    </location>
</feature>
<feature type="modified residue" description="Phosphotyrosine" evidence="8">
    <location>
        <position position="724"/>
    </location>
</feature>
<feature type="modified residue" description="Phosphoserine" evidence="8">
    <location>
        <position position="726"/>
    </location>
</feature>
<feature type="modified residue" description="Phosphoserine" evidence="8">
    <location>
        <position position="729"/>
    </location>
</feature>
<feature type="modified residue" description="Phosphoserine" evidence="8">
    <location>
        <position position="730"/>
    </location>
</feature>
<feature type="modified residue" description="Phosphoserine" evidence="8">
    <location>
        <position position="734"/>
    </location>
</feature>
<feature type="modified residue" description="Phosphoserine" evidence="8">
    <location>
        <position position="873"/>
    </location>
</feature>
<feature type="modified residue" description="Phosphoserine" evidence="8">
    <location>
        <position position="876"/>
    </location>
</feature>
<feature type="modified residue" description="Phosphoserine" evidence="8">
    <location>
        <position position="893"/>
    </location>
</feature>
<feature type="modified residue" description="Phosphoserine; by PKA" evidence="2">
    <location>
        <position position="1057"/>
    </location>
</feature>
<feature type="cross-link" description="Glycyl lysine isopeptide (Lys-Gly) (interchain with G-Cter in SUMO2)" evidence="2">
    <location>
        <position position="707"/>
    </location>
</feature>
<feature type="sequence conflict" description="In Ref. 1; AAD21792." evidence="7" ref="1">
    <original>Q</original>
    <variation>L</variation>
    <location>
        <position position="938"/>
    </location>
</feature>
<feature type="sequence conflict" description="In Ref. 4; BAD32273." evidence="7" ref="4">
    <original>P</original>
    <variation>S</variation>
    <location>
        <position position="955"/>
    </location>
</feature>
<proteinExistence type="evidence at protein level"/>